<gene>
    <name type="primary">queD</name>
    <name type="ordered locus">AF_0440</name>
</gene>
<protein>
    <recommendedName>
        <fullName>Putative 6-carboxy-5,6,7,8-tetrahydropterin synthase</fullName>
        <shortName>CPH4 synthase</shortName>
        <ecNumber>4.1.2.50</ecNumber>
    </recommendedName>
    <alternativeName>
        <fullName>Archaeosine biosynthesis protein QueD</fullName>
    </alternativeName>
</protein>
<feature type="chain" id="PRO_0000057930" description="Putative 6-carboxy-5,6,7,8-tetrahydropterin synthase">
    <location>
        <begin position="1"/>
        <end position="115"/>
    </location>
</feature>
<feature type="active site" description="Proton acceptor" evidence="1">
    <location>
        <position position="25"/>
    </location>
</feature>
<feature type="active site" description="Charge relay system" evidence="1">
    <location>
        <position position="68"/>
    </location>
</feature>
<feature type="active site" description="Charge relay system" evidence="1">
    <location>
        <position position="105"/>
    </location>
</feature>
<feature type="binding site" evidence="1">
    <location>
        <position position="17"/>
    </location>
    <ligand>
        <name>Zn(2+)</name>
        <dbReference type="ChEBI" id="CHEBI:29105"/>
    </ligand>
</feature>
<feature type="binding site" evidence="1">
    <location>
        <position position="29"/>
    </location>
    <ligand>
        <name>Zn(2+)</name>
        <dbReference type="ChEBI" id="CHEBI:29105"/>
    </ligand>
</feature>
<feature type="binding site" evidence="1">
    <location>
        <position position="31"/>
    </location>
    <ligand>
        <name>Zn(2+)</name>
        <dbReference type="ChEBI" id="CHEBI:29105"/>
    </ligand>
</feature>
<proteinExistence type="inferred from homology"/>
<sequence length="115" mass="13150">MEEEMIIGISTSFSAAHSIPGHKKCGKVHGHNFKVEVEISGKVKENGMVMDFFDLKRIVNEVVAKFDHTLLNEQIEIPTSENICLRIFSELAEKGLNVRRVRVAENEDKWAEIRR</sequence>
<comment type="function">
    <text evidence="1">Catalyzes the conversion of 7,8-dihydroneopterin triphosphate (H2NTP) to 6-carboxy-5,6,7,8-tetrahydropterin (CPH4) and acetaldehyde.</text>
</comment>
<comment type="catalytic activity">
    <reaction>
        <text>7,8-dihydroneopterin 3'-triphosphate + H2O = 6-carboxy-5,6,7,8-tetrahydropterin + triphosphate + acetaldehyde + 2 H(+)</text>
        <dbReference type="Rhea" id="RHEA:27966"/>
        <dbReference type="ChEBI" id="CHEBI:15343"/>
        <dbReference type="ChEBI" id="CHEBI:15377"/>
        <dbReference type="ChEBI" id="CHEBI:15378"/>
        <dbReference type="ChEBI" id="CHEBI:18036"/>
        <dbReference type="ChEBI" id="CHEBI:58462"/>
        <dbReference type="ChEBI" id="CHEBI:61032"/>
        <dbReference type="EC" id="4.1.2.50"/>
    </reaction>
</comment>
<comment type="cofactor">
    <cofactor evidence="1">
        <name>Zn(2+)</name>
        <dbReference type="ChEBI" id="CHEBI:29105"/>
    </cofactor>
    <text evidence="1">Binds 1 zinc ion per subunit.</text>
</comment>
<comment type="pathway">
    <text>Purine metabolism; 7-cyano-7-deazaguanine biosynthesis.</text>
</comment>
<comment type="miscellaneous">
    <text evidence="1">The active site is at the interface between 2 subunits. The proton acceptor Cys is on one subunit, and the charge relay system is on the other subunit (By similarity).</text>
</comment>
<comment type="similarity">
    <text evidence="2">Belongs to the PTPS family. QueD subfamily.</text>
</comment>
<keyword id="KW-0456">Lyase</keyword>
<keyword id="KW-0479">Metal-binding</keyword>
<keyword id="KW-1185">Reference proteome</keyword>
<keyword id="KW-0862">Zinc</keyword>
<organism>
    <name type="scientific">Archaeoglobus fulgidus (strain ATCC 49558 / DSM 4304 / JCM 9628 / NBRC 100126 / VC-16)</name>
    <dbReference type="NCBI Taxonomy" id="224325"/>
    <lineage>
        <taxon>Archaea</taxon>
        <taxon>Methanobacteriati</taxon>
        <taxon>Methanobacteriota</taxon>
        <taxon>Archaeoglobi</taxon>
        <taxon>Archaeoglobales</taxon>
        <taxon>Archaeoglobaceae</taxon>
        <taxon>Archaeoglobus</taxon>
    </lineage>
</organism>
<dbReference type="EC" id="4.1.2.50"/>
<dbReference type="EMBL" id="AE000782">
    <property type="protein sequence ID" value="AAB90801.1"/>
    <property type="molecule type" value="Genomic_DNA"/>
</dbReference>
<dbReference type="PIR" id="H69304">
    <property type="entry name" value="H69304"/>
</dbReference>
<dbReference type="SMR" id="O29809"/>
<dbReference type="STRING" id="224325.AF_0440"/>
<dbReference type="PaxDb" id="224325-AF_0440"/>
<dbReference type="EnsemblBacteria" id="AAB90801">
    <property type="protein sequence ID" value="AAB90801"/>
    <property type="gene ID" value="AF_0440"/>
</dbReference>
<dbReference type="KEGG" id="afu:AF_0440"/>
<dbReference type="eggNOG" id="arCOG02172">
    <property type="taxonomic scope" value="Archaea"/>
</dbReference>
<dbReference type="HOGENOM" id="CLU_111016_6_1_2"/>
<dbReference type="OrthoDB" id="6529at2157"/>
<dbReference type="PhylomeDB" id="O29809"/>
<dbReference type="UniPathway" id="UPA00391"/>
<dbReference type="Proteomes" id="UP000002199">
    <property type="component" value="Chromosome"/>
</dbReference>
<dbReference type="GO" id="GO:0070497">
    <property type="term" value="F:6-carboxytetrahydropterin synthase activity"/>
    <property type="evidence" value="ECO:0007669"/>
    <property type="project" value="UniProtKB-EC"/>
</dbReference>
<dbReference type="GO" id="GO:0046872">
    <property type="term" value="F:metal ion binding"/>
    <property type="evidence" value="ECO:0007669"/>
    <property type="project" value="UniProtKB-KW"/>
</dbReference>
<dbReference type="Gene3D" id="3.30.479.10">
    <property type="entry name" value="6-pyruvoyl tetrahydropterin synthase/QueD"/>
    <property type="match status" value="1"/>
</dbReference>
<dbReference type="InterPro" id="IPR007115">
    <property type="entry name" value="6-PTP_synth/QueD"/>
</dbReference>
<dbReference type="InterPro" id="IPR038418">
    <property type="entry name" value="6-PTP_synth/QueD_sf"/>
</dbReference>
<dbReference type="NCBIfam" id="TIGR03367">
    <property type="entry name" value="queuosine_QueD"/>
    <property type="match status" value="1"/>
</dbReference>
<dbReference type="PANTHER" id="PTHR12589:SF7">
    <property type="entry name" value="6-PYRUVOYL TETRAHYDROBIOPTERIN SYNTHASE"/>
    <property type="match status" value="1"/>
</dbReference>
<dbReference type="PANTHER" id="PTHR12589">
    <property type="entry name" value="PYRUVOYL TETRAHYDROBIOPTERIN SYNTHASE"/>
    <property type="match status" value="1"/>
</dbReference>
<dbReference type="Pfam" id="PF01242">
    <property type="entry name" value="PTPS"/>
    <property type="match status" value="1"/>
</dbReference>
<dbReference type="PIRSF" id="PIRSF006113">
    <property type="entry name" value="PTP_synth"/>
    <property type="match status" value="1"/>
</dbReference>
<dbReference type="SUPFAM" id="SSF55620">
    <property type="entry name" value="Tetrahydrobiopterin biosynthesis enzymes-like"/>
    <property type="match status" value="1"/>
</dbReference>
<accession>O29809</accession>
<evidence type="ECO:0000250" key="1"/>
<evidence type="ECO:0000305" key="2"/>
<name>QUED_ARCFU</name>
<reference key="1">
    <citation type="journal article" date="1997" name="Nature">
        <title>The complete genome sequence of the hyperthermophilic, sulphate-reducing archaeon Archaeoglobus fulgidus.</title>
        <authorList>
            <person name="Klenk H.-P."/>
            <person name="Clayton R.A."/>
            <person name="Tomb J.-F."/>
            <person name="White O."/>
            <person name="Nelson K.E."/>
            <person name="Ketchum K.A."/>
            <person name="Dodson R.J."/>
            <person name="Gwinn M.L."/>
            <person name="Hickey E.K."/>
            <person name="Peterson J.D."/>
            <person name="Richardson D.L."/>
            <person name="Kerlavage A.R."/>
            <person name="Graham D.E."/>
            <person name="Kyrpides N.C."/>
            <person name="Fleischmann R.D."/>
            <person name="Quackenbush J."/>
            <person name="Lee N.H."/>
            <person name="Sutton G.G."/>
            <person name="Gill S.R."/>
            <person name="Kirkness E.F."/>
            <person name="Dougherty B.A."/>
            <person name="McKenney K."/>
            <person name="Adams M.D."/>
            <person name="Loftus B.J."/>
            <person name="Peterson S.N."/>
            <person name="Reich C.I."/>
            <person name="McNeil L.K."/>
            <person name="Badger J.H."/>
            <person name="Glodek A."/>
            <person name="Zhou L."/>
            <person name="Overbeek R."/>
            <person name="Gocayne J.D."/>
            <person name="Weidman J.F."/>
            <person name="McDonald L.A."/>
            <person name="Utterback T.R."/>
            <person name="Cotton M.D."/>
            <person name="Spriggs T."/>
            <person name="Artiach P."/>
            <person name="Kaine B.P."/>
            <person name="Sykes S.M."/>
            <person name="Sadow P.W."/>
            <person name="D'Andrea K.P."/>
            <person name="Bowman C."/>
            <person name="Fujii C."/>
            <person name="Garland S.A."/>
            <person name="Mason T.M."/>
            <person name="Olsen G.J."/>
            <person name="Fraser C.M."/>
            <person name="Smith H.O."/>
            <person name="Woese C.R."/>
            <person name="Venter J.C."/>
        </authorList>
    </citation>
    <scope>NUCLEOTIDE SEQUENCE [LARGE SCALE GENOMIC DNA]</scope>
    <source>
        <strain>ATCC 49558 / DSM 4304 / JCM 9628 / NBRC 100126 / VC-16</strain>
    </source>
</reference>